<evidence type="ECO:0000255" key="1"/>
<evidence type="ECO:0000305" key="2"/>
<gene>
    <name type="primary">ndhD</name>
</gene>
<proteinExistence type="inferred from homology"/>
<keyword id="KW-0150">Chloroplast</keyword>
<keyword id="KW-0472">Membrane</keyword>
<keyword id="KW-0520">NAD</keyword>
<keyword id="KW-0521">NADP</keyword>
<keyword id="KW-0934">Plastid</keyword>
<keyword id="KW-0618">Plastoquinone</keyword>
<keyword id="KW-0874">Quinone</keyword>
<keyword id="KW-1185">Reference proteome</keyword>
<keyword id="KW-0793">Thylakoid</keyword>
<keyword id="KW-1278">Translocase</keyword>
<keyword id="KW-0812">Transmembrane</keyword>
<keyword id="KW-1133">Transmembrane helix</keyword>
<feature type="chain" id="PRO_0000118032" description="NAD(P)H-quinone oxidoreductase chain 4, chloroplastic">
    <location>
        <begin position="1"/>
        <end position="500"/>
    </location>
</feature>
<feature type="transmembrane region" description="Helical" evidence="1">
    <location>
        <begin position="4"/>
        <end position="24"/>
    </location>
</feature>
<feature type="transmembrane region" description="Helical" evidence="1">
    <location>
        <begin position="37"/>
        <end position="57"/>
    </location>
</feature>
<feature type="transmembrane region" description="Helical" evidence="1">
    <location>
        <begin position="87"/>
        <end position="107"/>
    </location>
</feature>
<feature type="transmembrane region" description="Helical" evidence="1">
    <location>
        <begin position="113"/>
        <end position="130"/>
    </location>
</feature>
<feature type="transmembrane region" description="Helical" evidence="1">
    <location>
        <begin position="134"/>
        <end position="154"/>
    </location>
</feature>
<feature type="transmembrane region" description="Helical" evidence="1">
    <location>
        <begin position="167"/>
        <end position="187"/>
    </location>
</feature>
<feature type="transmembrane region" description="Helical" evidence="1">
    <location>
        <begin position="211"/>
        <end position="231"/>
    </location>
</feature>
<feature type="transmembrane region" description="Helical" evidence="1">
    <location>
        <begin position="242"/>
        <end position="262"/>
    </location>
</feature>
<feature type="transmembrane region" description="Helical" evidence="1">
    <location>
        <begin position="272"/>
        <end position="292"/>
    </location>
</feature>
<feature type="transmembrane region" description="Helical" evidence="1">
    <location>
        <begin position="313"/>
        <end position="333"/>
    </location>
</feature>
<feature type="transmembrane region" description="Helical" evidence="1">
    <location>
        <begin position="334"/>
        <end position="354"/>
    </location>
</feature>
<feature type="transmembrane region" description="Helical" evidence="1">
    <location>
        <begin position="386"/>
        <end position="406"/>
    </location>
</feature>
<feature type="transmembrane region" description="Helical" evidence="1">
    <location>
        <begin position="417"/>
        <end position="437"/>
    </location>
</feature>
<feature type="transmembrane region" description="Helical" evidence="1">
    <location>
        <begin position="462"/>
        <end position="482"/>
    </location>
</feature>
<accession>P58420</accession>
<comment type="catalytic activity">
    <reaction>
        <text>a plastoquinone + NADH + (n+1) H(+)(in) = a plastoquinol + NAD(+) + n H(+)(out)</text>
        <dbReference type="Rhea" id="RHEA:42608"/>
        <dbReference type="Rhea" id="RHEA-COMP:9561"/>
        <dbReference type="Rhea" id="RHEA-COMP:9562"/>
        <dbReference type="ChEBI" id="CHEBI:15378"/>
        <dbReference type="ChEBI" id="CHEBI:17757"/>
        <dbReference type="ChEBI" id="CHEBI:57540"/>
        <dbReference type="ChEBI" id="CHEBI:57945"/>
        <dbReference type="ChEBI" id="CHEBI:62192"/>
    </reaction>
</comment>
<comment type="catalytic activity">
    <reaction>
        <text>a plastoquinone + NADPH + (n+1) H(+)(in) = a plastoquinol + NADP(+) + n H(+)(out)</text>
        <dbReference type="Rhea" id="RHEA:42612"/>
        <dbReference type="Rhea" id="RHEA-COMP:9561"/>
        <dbReference type="Rhea" id="RHEA-COMP:9562"/>
        <dbReference type="ChEBI" id="CHEBI:15378"/>
        <dbReference type="ChEBI" id="CHEBI:17757"/>
        <dbReference type="ChEBI" id="CHEBI:57783"/>
        <dbReference type="ChEBI" id="CHEBI:58349"/>
        <dbReference type="ChEBI" id="CHEBI:62192"/>
    </reaction>
</comment>
<comment type="subcellular location">
    <subcellularLocation>
        <location evidence="2">Plastid</location>
        <location evidence="2">Chloroplast thylakoid membrane</location>
        <topology evidence="2">Multi-pass membrane protein</topology>
    </subcellularLocation>
</comment>
<comment type="similarity">
    <text evidence="2">Belongs to the complex I subunit 4 family.</text>
</comment>
<reference key="1">
    <citation type="journal article" date="2000" name="Plant Mol. Biol. Rep.">
        <title>Chinese spring wheat (Triticum aestivum L.) chloroplast genome: complete sequence and contig clones.</title>
        <authorList>
            <person name="Ogihara Y."/>
            <person name="Isono K."/>
            <person name="Kojima T."/>
            <person name="Endo A."/>
            <person name="Hanaoka M."/>
            <person name="Shiina T."/>
            <person name="Terachi T."/>
            <person name="Utsugi S."/>
            <person name="Murata M."/>
            <person name="Mori N."/>
            <person name="Takumi S."/>
            <person name="Ikeo K."/>
            <person name="Gojobori T."/>
            <person name="Murai R."/>
            <person name="Murai K."/>
            <person name="Matsuoka Y."/>
            <person name="Ohnishi Y."/>
            <person name="Tajiri H."/>
            <person name="Tsunewaki K."/>
        </authorList>
    </citation>
    <scope>NUCLEOTIDE SEQUENCE [LARGE SCALE GENOMIC DNA]</scope>
    <source>
        <strain>cv. Chinese Spring</strain>
    </source>
</reference>
<protein>
    <recommendedName>
        <fullName>NAD(P)H-quinone oxidoreductase chain 4, chloroplastic</fullName>
        <ecNumber>7.1.1.-</ecNumber>
    </recommendedName>
    <alternativeName>
        <fullName>NAD(P)H dehydrogenase, chain 4</fullName>
    </alternativeName>
    <alternativeName>
        <fullName>NADH-plastoquinone oxidoreductase chain 4</fullName>
    </alternativeName>
</protein>
<organism>
    <name type="scientific">Triticum aestivum</name>
    <name type="common">Wheat</name>
    <dbReference type="NCBI Taxonomy" id="4565"/>
    <lineage>
        <taxon>Eukaryota</taxon>
        <taxon>Viridiplantae</taxon>
        <taxon>Streptophyta</taxon>
        <taxon>Embryophyta</taxon>
        <taxon>Tracheophyta</taxon>
        <taxon>Spermatophyta</taxon>
        <taxon>Magnoliopsida</taxon>
        <taxon>Liliopsida</taxon>
        <taxon>Poales</taxon>
        <taxon>Poaceae</taxon>
        <taxon>BOP clade</taxon>
        <taxon>Pooideae</taxon>
        <taxon>Triticodae</taxon>
        <taxon>Triticeae</taxon>
        <taxon>Triticinae</taxon>
        <taxon>Triticum</taxon>
    </lineage>
</organism>
<geneLocation type="chloroplast"/>
<name>NU4C_WHEAT</name>
<dbReference type="EC" id="7.1.1.-"/>
<dbReference type="EMBL" id="AB042240">
    <property type="protein sequence ID" value="BAB47085.1"/>
    <property type="molecule type" value="Genomic_DNA"/>
</dbReference>
<dbReference type="RefSeq" id="NP_114308.1">
    <property type="nucleotide sequence ID" value="NC_002762.1"/>
</dbReference>
<dbReference type="SMR" id="P58420"/>
<dbReference type="STRING" id="4565.P58420"/>
<dbReference type="PaxDb" id="4565-EPlTAEP00000010046"/>
<dbReference type="EnsemblPlants" id="TraesKAR6B01G0220010.1">
    <property type="protein sequence ID" value="cds.TraesKAR6B01G0220010.1"/>
    <property type="gene ID" value="TraesKAR6B01G0220010"/>
</dbReference>
<dbReference type="EnsemblPlants" id="TraesKARUn01G0067040.1">
    <property type="protein sequence ID" value="cds.TraesKARUn01G0067040.1"/>
    <property type="gene ID" value="TraesKARUn01G0067040"/>
</dbReference>
<dbReference type="EnsemblPlants" id="TraesKARUn01G0077270.1">
    <property type="protein sequence ID" value="cds.TraesKARUn01G0077270.1"/>
    <property type="gene ID" value="TraesKARUn01G0077270"/>
</dbReference>
<dbReference type="EnsemblPlants" id="TraesKARUn01G0079520.1">
    <property type="protein sequence ID" value="cds.TraesKARUn01G0079520.1"/>
    <property type="gene ID" value="TraesKARUn01G0079520"/>
</dbReference>
<dbReference type="EnsemblPlants" id="TraesKARUn01G0080990.1">
    <property type="protein sequence ID" value="cds.TraesKARUn01G0080990.1"/>
    <property type="gene ID" value="TraesKARUn01G0080990"/>
</dbReference>
<dbReference type="EnsemblPlants" id="TraesKARUn01G0085650.1">
    <property type="protein sequence ID" value="cds.TraesKARUn01G0085650.1"/>
    <property type="gene ID" value="TraesKARUn01G0085650"/>
</dbReference>
<dbReference type="EnsemblPlants" id="TraesKARUn01G0087050.1">
    <property type="protein sequence ID" value="cds.TraesKARUn01G0087050.1"/>
    <property type="gene ID" value="TraesKARUn01G0087050"/>
</dbReference>
<dbReference type="EnsemblPlants" id="TraesKARUn01G0087400.1">
    <property type="protein sequence ID" value="cds.TraesKARUn01G0087400.1"/>
    <property type="gene ID" value="TraesKARUn01G0087400"/>
</dbReference>
<dbReference type="EnsemblPlants" id="TraesKARUn01G0087760.1">
    <property type="protein sequence ID" value="cds.TraesKARUn01G0087760.1"/>
    <property type="gene ID" value="TraesKARUn01G0087760"/>
</dbReference>
<dbReference type="EnsemblPlants" id="TraesKARUn01G0090500.1">
    <property type="protein sequence ID" value="cds.TraesKARUn01G0090500.1"/>
    <property type="gene ID" value="TraesKARUn01G0090500"/>
</dbReference>
<dbReference type="EnsemblPlants" id="TraesKARUn01G0097600.1">
    <property type="protein sequence ID" value="cds.TraesKARUn01G0097600.1"/>
    <property type="gene ID" value="TraesKARUn01G0097600"/>
</dbReference>
<dbReference type="EnsemblPlants" id="TraesKARUn01G0097930.1">
    <property type="protein sequence ID" value="cds.TraesKARUn01G0097930.1"/>
    <property type="gene ID" value="TraesKARUn01G0097930"/>
</dbReference>
<dbReference type="EnsemblPlants" id="TraesKARUn01G0098360.1">
    <property type="protein sequence ID" value="cds.TraesKARUn01G0098360.1"/>
    <property type="gene ID" value="TraesKARUn01G0098360"/>
</dbReference>
<dbReference type="EnsemblPlants" id="TraesKARUn01G0098930.1">
    <property type="protein sequence ID" value="cds.TraesKARUn01G0098930.1"/>
    <property type="gene ID" value="TraesKARUn01G0098930"/>
</dbReference>
<dbReference type="EnsemblPlants" id="TraesKARUn01G0099570.1">
    <property type="protein sequence ID" value="cds.TraesKARUn01G0099570.1"/>
    <property type="gene ID" value="TraesKARUn01G0099570"/>
</dbReference>
<dbReference type="EnsemblPlants" id="TraesKARUn01G0103070.1">
    <property type="protein sequence ID" value="cds.TraesKARUn01G0103070.1"/>
    <property type="gene ID" value="TraesKARUn01G0103070"/>
</dbReference>
<dbReference type="EnsemblPlants" id="TraesKARUn01G0103300.1">
    <property type="protein sequence ID" value="cds.TraesKARUn01G0103300.1"/>
    <property type="gene ID" value="TraesKARUn01G0103300"/>
</dbReference>
<dbReference type="EnsemblPlants" id="TraesKARUn01G0103650.1">
    <property type="protein sequence ID" value="cds.TraesKARUn01G0103650.1"/>
    <property type="gene ID" value="TraesKARUn01G0103650"/>
</dbReference>
<dbReference type="EnsemblPlants" id="TraesKARUn01G0108780.1">
    <property type="protein sequence ID" value="cds.TraesKARUn01G0108780.1"/>
    <property type="gene ID" value="TraesKARUn01G0108780"/>
</dbReference>
<dbReference type="EnsemblPlants" id="TraesKARUn01G0127650.1">
    <property type="protein sequence ID" value="cds.TraesKARUn01G0127650.1"/>
    <property type="gene ID" value="TraesKARUn01G0127650"/>
</dbReference>
<dbReference type="EnsemblPlants" id="TraesKARUn01G0155710.1">
    <property type="protein sequence ID" value="cds.TraesKARUn01G0155710.1"/>
    <property type="gene ID" value="TraesKARUn01G0155710"/>
</dbReference>
<dbReference type="EnsemblPlants" id="TraesKARUn01G0168870.1">
    <property type="protein sequence ID" value="cds.TraesKARUn01G0168870.1"/>
    <property type="gene ID" value="TraesKARUn01G0168870"/>
</dbReference>
<dbReference type="EnsemblPlants" id="TraesKARUn01G0171400.1">
    <property type="protein sequence ID" value="cds.TraesKARUn01G0171400.1"/>
    <property type="gene ID" value="TraesKARUn01G0171400"/>
</dbReference>
<dbReference type="EnsemblPlants" id="TraesKARUn01G0172070.1">
    <property type="protein sequence ID" value="cds.TraesKARUn01G0172070.1"/>
    <property type="gene ID" value="TraesKARUn01G0172070"/>
</dbReference>
<dbReference type="EnsemblPlants" id="TraesKARUn01G0172570.1">
    <property type="protein sequence ID" value="cds.TraesKARUn01G0172570.1"/>
    <property type="gene ID" value="TraesKARUn01G0172570"/>
</dbReference>
<dbReference type="EnsemblPlants" id="TraesKARUn01G0173540.1">
    <property type="protein sequence ID" value="cds.TraesKARUn01G0173540.1"/>
    <property type="gene ID" value="TraesKARUn01G0173540"/>
</dbReference>
<dbReference type="EnsemblPlants" id="TraesKARUn01G0175060.1">
    <property type="protein sequence ID" value="cds.TraesKARUn01G0175060.1"/>
    <property type="gene ID" value="TraesKARUn01G0175060"/>
</dbReference>
<dbReference type="EnsemblPlants" id="TraesKARUn01G0175190.1">
    <property type="protein sequence ID" value="cds.TraesKARUn01G0175190.1"/>
    <property type="gene ID" value="TraesKARUn01G0175190"/>
</dbReference>
<dbReference type="EnsemblPlants" id="TraesKARUn01G0175940.1">
    <property type="protein sequence ID" value="cds.TraesKARUn01G0175940.1"/>
    <property type="gene ID" value="TraesKARUn01G0175940"/>
</dbReference>
<dbReference type="EnsemblPlants" id="TraesKARUn01G0180520.1">
    <property type="protein sequence ID" value="cds.TraesKARUn01G0180520.1"/>
    <property type="gene ID" value="TraesKARUn01G0180520"/>
</dbReference>
<dbReference type="EnsemblPlants" id="TraesKARUn01G0186290.1">
    <property type="protein sequence ID" value="cds.TraesKARUn01G0186290.1"/>
    <property type="gene ID" value="TraesKARUn01G0186290"/>
</dbReference>
<dbReference type="EnsemblPlants" id="TraesKARUn01G0186920.1">
    <property type="protein sequence ID" value="cds.TraesKARUn01G0186920.1"/>
    <property type="gene ID" value="TraesKARUn01G0186920"/>
</dbReference>
<dbReference type="EnsemblPlants" id="TraesKARUn01G0194600.1">
    <property type="protein sequence ID" value="cds.TraesKARUn01G0194600.1"/>
    <property type="gene ID" value="TraesKARUn01G0194600"/>
</dbReference>
<dbReference type="EnsemblPlants" id="TraesPARA_EIv1.0_2014360.1">
    <property type="protein sequence ID" value="TraesPARA_EIv1.0_2014360.1.CDS1"/>
    <property type="gene ID" value="TraesPARA_EIv1.0_2014360"/>
</dbReference>
<dbReference type="EnsemblPlants" id="TraesPARA_EIv1.0_2643700.1">
    <property type="protein sequence ID" value="TraesPARA_EIv1.0_2643700.1.CDS1"/>
    <property type="gene ID" value="TraesPARA_EIv1.0_2643700"/>
</dbReference>
<dbReference type="EnsemblPlants" id="TraesPARA_EIv1.0_2644040.1">
    <property type="protein sequence ID" value="TraesPARA_EIv1.0_2644040.1.CDS1"/>
    <property type="gene ID" value="TraesPARA_EIv1.0_2644040"/>
</dbReference>
<dbReference type="EnsemblPlants" id="TraesPARA_EIv1.0_2644200.1">
    <property type="protein sequence ID" value="TraesPARA_EIv1.0_2644200.1.CDS1"/>
    <property type="gene ID" value="TraesPARA_EIv1.0_2644200"/>
</dbReference>
<dbReference type="EnsemblPlants" id="TraesPARA_EIv1.0_2644720.1">
    <property type="protein sequence ID" value="TraesPARA_EIv1.0_2644720.1.CDS1"/>
    <property type="gene ID" value="TraesPARA_EIv1.0_2644720"/>
</dbReference>
<dbReference type="EnsemblPlants" id="TraesPARA_EIv1.0_2645110.1">
    <property type="protein sequence ID" value="TraesPARA_EIv1.0_2645110.1.CDS1"/>
    <property type="gene ID" value="TraesPARA_EIv1.0_2645110"/>
</dbReference>
<dbReference type="EnsemblPlants" id="TraesPARA_EIv1.0_2645260.1">
    <property type="protein sequence ID" value="TraesPARA_EIv1.0_2645260.1.CDS1"/>
    <property type="gene ID" value="TraesPARA_EIv1.0_2645260"/>
</dbReference>
<dbReference type="EnsemblPlants" id="TraesPARA_EIv1.0_2645660.1">
    <property type="protein sequence ID" value="TraesPARA_EIv1.0_2645660.1.CDS1"/>
    <property type="gene ID" value="TraesPARA_EIv1.0_2645660"/>
</dbReference>
<dbReference type="EnsemblPlants" id="TraesPARA_EIv1.0_2645830.1">
    <property type="protein sequence ID" value="TraesPARA_EIv1.0_2645830.1.CDS1"/>
    <property type="gene ID" value="TraesPARA_EIv1.0_2645830"/>
</dbReference>
<dbReference type="EnsemblPlants" id="TraesPARA_EIv1.0_2645970.1">
    <property type="protein sequence ID" value="TraesPARA_EIv1.0_2645970.1.CDS1"/>
    <property type="gene ID" value="TraesPARA_EIv1.0_2645970"/>
</dbReference>
<dbReference type="EnsemblPlants" id="TraesPARA_EIv1.0_2646630.1">
    <property type="protein sequence ID" value="TraesPARA_EIv1.0_2646630.1.CDS1"/>
    <property type="gene ID" value="TraesPARA_EIv1.0_2646630"/>
</dbReference>
<dbReference type="EnsemblPlants" id="TraesPARA_EIv1.0_2646840.1">
    <property type="protein sequence ID" value="TraesPARA_EIv1.0_2646840.1.CDS1"/>
    <property type="gene ID" value="TraesPARA_EIv1.0_2646840"/>
</dbReference>
<dbReference type="EnsemblPlants" id="TraesPARA_EIv1.0_2646980.1">
    <property type="protein sequence ID" value="TraesPARA_EIv1.0_2646980.1.CDS1"/>
    <property type="gene ID" value="TraesPARA_EIv1.0_2646980"/>
</dbReference>
<dbReference type="EnsemblPlants" id="TraesPARA_EIv1.0_2647140.1">
    <property type="protein sequence ID" value="TraesPARA_EIv1.0_2647140.1.CDS1"/>
    <property type="gene ID" value="TraesPARA_EIv1.0_2647140"/>
</dbReference>
<dbReference type="EnsemblPlants" id="TraesPARA_EIv1.0_2647660.1">
    <property type="protein sequence ID" value="TraesPARA_EIv1.0_2647660.1.CDS1"/>
    <property type="gene ID" value="TraesPARA_EIv1.0_2647660"/>
</dbReference>
<dbReference type="EnsemblPlants" id="TraesPARA_EIv1.0_2647810.1">
    <property type="protein sequence ID" value="TraesPARA_EIv1.0_2647810.1.CDS1"/>
    <property type="gene ID" value="TraesPARA_EIv1.0_2647810"/>
</dbReference>
<dbReference type="EnsemblPlants" id="TraesPARA_EIv1.0_2647950.1">
    <property type="protein sequence ID" value="TraesPARA_EIv1.0_2647950.1.CDS1"/>
    <property type="gene ID" value="TraesPARA_EIv1.0_2647950"/>
</dbReference>
<dbReference type="EnsemblPlants" id="TraesPARA_EIv1.0_2648410.1">
    <property type="protein sequence ID" value="TraesPARA_EIv1.0_2648410.1.CDS1"/>
    <property type="gene ID" value="TraesPARA_EIv1.0_2648410"/>
</dbReference>
<dbReference type="EnsemblPlants" id="TraesPARA_EIv1.0_2648630.1">
    <property type="protein sequence ID" value="TraesPARA_EIv1.0_2648630.1.CDS1"/>
    <property type="gene ID" value="TraesPARA_EIv1.0_2648630"/>
</dbReference>
<dbReference type="EnsemblPlants" id="TraesPARA_EIv1.0_2648800.1">
    <property type="protein sequence ID" value="TraesPARA_EIv1.0_2648800.1.CDS1"/>
    <property type="gene ID" value="TraesPARA_EIv1.0_2648800"/>
</dbReference>
<dbReference type="EnsemblPlants" id="TraesPARA_EIv1.0_2648900.1">
    <property type="protein sequence ID" value="TraesPARA_EIv1.0_2648900.1.CDS1"/>
    <property type="gene ID" value="TraesPARA_EIv1.0_2648900"/>
</dbReference>
<dbReference type="EnsemblPlants" id="TraesPARA_EIv1.0_2649290.1">
    <property type="protein sequence ID" value="TraesPARA_EIv1.0_2649290.1.CDS1"/>
    <property type="gene ID" value="TraesPARA_EIv1.0_2649290"/>
</dbReference>
<dbReference type="EnsemblPlants" id="TraesPARA_EIv1.0_2649590.1">
    <property type="protein sequence ID" value="TraesPARA_EIv1.0_2649590.1.CDS1"/>
    <property type="gene ID" value="TraesPARA_EIv1.0_2649590"/>
</dbReference>
<dbReference type="EnsemblPlants" id="TraesPARA_EIv1.0_2649700.1">
    <property type="protein sequence ID" value="TraesPARA_EIv1.0_2649700.1.CDS1"/>
    <property type="gene ID" value="TraesPARA_EIv1.0_2649700"/>
</dbReference>
<dbReference type="EnsemblPlants" id="TraesPARA_EIv1.0_2650160.1">
    <property type="protein sequence ID" value="TraesPARA_EIv1.0_2650160.1.CDS1"/>
    <property type="gene ID" value="TraesPARA_EIv1.0_2650160"/>
</dbReference>
<dbReference type="EnsemblPlants" id="TraesPARA_EIv1.0_2650370.1">
    <property type="protein sequence ID" value="TraesPARA_EIv1.0_2650370.1.CDS1"/>
    <property type="gene ID" value="TraesPARA_EIv1.0_2650370"/>
</dbReference>
<dbReference type="EnsemblPlants" id="TraesPARA_EIv1.0_2650550.1">
    <property type="protein sequence ID" value="TraesPARA_EIv1.0_2650550.1.CDS1"/>
    <property type="gene ID" value="TraesPARA_EIv1.0_2650550"/>
</dbReference>
<dbReference type="EnsemblPlants" id="TraesPARA_EIv1.0_2650670.1">
    <property type="protein sequence ID" value="TraesPARA_EIv1.0_2650670.1.CDS1"/>
    <property type="gene ID" value="TraesPARA_EIv1.0_2650670"/>
</dbReference>
<dbReference type="EnsemblPlants" id="TraesPARA_EIv1.0_2651300.1">
    <property type="protein sequence ID" value="TraesPARA_EIv1.0_2651300.1.CDS1"/>
    <property type="gene ID" value="TraesPARA_EIv1.0_2651300"/>
</dbReference>
<dbReference type="EnsemblPlants" id="TraesPARA_EIv1.0_2651960.1">
    <property type="protein sequence ID" value="TraesPARA_EIv1.0_2651960.1.CDS1"/>
    <property type="gene ID" value="TraesPARA_EIv1.0_2651960"/>
</dbReference>
<dbReference type="EnsemblPlants" id="TraesPARA_EIv1.0_2652070.1">
    <property type="protein sequence ID" value="TraesPARA_EIv1.0_2652070.1.CDS1"/>
    <property type="gene ID" value="TraesPARA_EIv1.0_2652070"/>
</dbReference>
<dbReference type="EnsemblPlants" id="TraesPARA_EIv1.0_2652230.1">
    <property type="protein sequence ID" value="TraesPARA_EIv1.0_2652230.1.CDS1"/>
    <property type="gene ID" value="TraesPARA_EIv1.0_2652230"/>
</dbReference>
<dbReference type="EnsemblPlants" id="TraesPARA_EIv1.0_2652410.1">
    <property type="protein sequence ID" value="TraesPARA_EIv1.0_2652410.1.CDS1"/>
    <property type="gene ID" value="TraesPARA_EIv1.0_2652410"/>
</dbReference>
<dbReference type="EnsemblPlants" id="TraesPARA_EIv1.0_2652640.1">
    <property type="protein sequence ID" value="TraesPARA_EIv1.0_2652640.1.CDS1"/>
    <property type="gene ID" value="TraesPARA_EIv1.0_2652640"/>
</dbReference>
<dbReference type="EnsemblPlants" id="TraesPARA_EIv1.0_2652930.1">
    <property type="protein sequence ID" value="TraesPARA_EIv1.0_2652930.1.CDS1"/>
    <property type="gene ID" value="TraesPARA_EIv1.0_2652930"/>
</dbReference>
<dbReference type="EnsemblPlants" id="TraesPARA_EIv1.0_2653080.1">
    <property type="protein sequence ID" value="TraesPARA_EIv1.0_2653080.1.CDS1"/>
    <property type="gene ID" value="TraesPARA_EIv1.0_2653080"/>
</dbReference>
<dbReference type="EnsemblPlants" id="TraesPARA_EIv1.0_2653310.1">
    <property type="protein sequence ID" value="TraesPARA_EIv1.0_2653310.1.CDS1"/>
    <property type="gene ID" value="TraesPARA_EIv1.0_2653310"/>
</dbReference>
<dbReference type="EnsemblPlants" id="TraesPARA_EIv1.0_2653440.1">
    <property type="protein sequence ID" value="TraesPARA_EIv1.0_2653440.1.CDS1"/>
    <property type="gene ID" value="TraesPARA_EIv1.0_2653440"/>
</dbReference>
<dbReference type="EnsemblPlants" id="TraesPARA_EIv1.0_2653690.1">
    <property type="protein sequence ID" value="TraesPARA_EIv1.0_2653690.1.CDS1"/>
    <property type="gene ID" value="TraesPARA_EIv1.0_2653690"/>
</dbReference>
<dbReference type="EnsemblPlants" id="TraesPARA_EIv1.0_2653780.1">
    <property type="protein sequence ID" value="TraesPARA_EIv1.0_2653780.1.CDS1"/>
    <property type="gene ID" value="TraesPARA_EIv1.0_2653780"/>
</dbReference>
<dbReference type="EnsemblPlants" id="TraesPARA_EIv1.0_2654540.1">
    <property type="protein sequence ID" value="TraesPARA_EIv1.0_2654540.1.CDS1"/>
    <property type="gene ID" value="TraesPARA_EIv1.0_2654540"/>
</dbReference>
<dbReference type="EnsemblPlants" id="TraesPARA_EIv1.0_2654700.1">
    <property type="protein sequence ID" value="TraesPARA_EIv1.0_2654700.1.CDS1"/>
    <property type="gene ID" value="TraesPARA_EIv1.0_2654700"/>
</dbReference>
<dbReference type="EnsemblPlants" id="TraesPARA_EIv1.0_2655310.1">
    <property type="protein sequence ID" value="TraesPARA_EIv1.0_2655310.1.CDS1"/>
    <property type="gene ID" value="TraesPARA_EIv1.0_2655310"/>
</dbReference>
<dbReference type="EnsemblPlants" id="TraesPARA_EIv1.0_2655550.1">
    <property type="protein sequence ID" value="TraesPARA_EIv1.0_2655550.1.CDS1"/>
    <property type="gene ID" value="TraesPARA_EIv1.0_2655550"/>
</dbReference>
<dbReference type="EnsemblPlants" id="TraesPARA_EIv1.0_2655770.1">
    <property type="protein sequence ID" value="TraesPARA_EIv1.0_2655770.1.CDS1"/>
    <property type="gene ID" value="TraesPARA_EIv1.0_2655770"/>
</dbReference>
<dbReference type="EnsemblPlants" id="TraesPARA_EIv1.0_2655890.1">
    <property type="protein sequence ID" value="TraesPARA_EIv1.0_2655890.1.CDS1"/>
    <property type="gene ID" value="TraesPARA_EIv1.0_2655890"/>
</dbReference>
<dbReference type="EnsemblPlants" id="TraesPARA_EIv1.0_2656170.1">
    <property type="protein sequence ID" value="TraesPARA_EIv1.0_2656170.1.CDS1"/>
    <property type="gene ID" value="TraesPARA_EIv1.0_2656170"/>
</dbReference>
<dbReference type="EnsemblPlants" id="TraesPARA_EIv1.0_2656970.1">
    <property type="protein sequence ID" value="TraesPARA_EIv1.0_2656970.1.CDS1"/>
    <property type="gene ID" value="TraesPARA_EIv1.0_2656970"/>
</dbReference>
<dbReference type="EnsemblPlants" id="TraesPARA_EIv1.0_2657210.1">
    <property type="protein sequence ID" value="TraesPARA_EIv1.0_2657210.1.CDS1"/>
    <property type="gene ID" value="TraesPARA_EIv1.0_2657210"/>
</dbReference>
<dbReference type="EnsemblPlants" id="TraesPARA_EIv1.0_2658200.1">
    <property type="protein sequence ID" value="TraesPARA_EIv1.0_2658200.1.CDS1"/>
    <property type="gene ID" value="TraesPARA_EIv1.0_2658200"/>
</dbReference>
<dbReference type="EnsemblPlants" id="TraesPARA_EIv1.0_2658420.1">
    <property type="protein sequence ID" value="TraesPARA_EIv1.0_2658420.1.CDS1"/>
    <property type="gene ID" value="TraesPARA_EIv1.0_2658420"/>
</dbReference>
<dbReference type="EnsemblPlants" id="TraesPARA_EIv1.0_2660130.1">
    <property type="protein sequence ID" value="TraesPARA_EIv1.0_2660130.1.CDS1"/>
    <property type="gene ID" value="TraesPARA_EIv1.0_2660130"/>
</dbReference>
<dbReference type="EnsemblPlants" id="TraesPARA_EIv1.0_2660450.1">
    <property type="protein sequence ID" value="TraesPARA_EIv1.0_2660450.1.CDS1"/>
    <property type="gene ID" value="TraesPARA_EIv1.0_2660450"/>
</dbReference>
<dbReference type="EnsemblPlants" id="TraesPARA_EIv1.0_2662860.1">
    <property type="protein sequence ID" value="TraesPARA_EIv1.0_2662860.1.CDS1"/>
    <property type="gene ID" value="TraesPARA_EIv1.0_2662860"/>
</dbReference>
<dbReference type="EnsemblPlants" id="TraesPARA_EIv1.0_2663280.1">
    <property type="protein sequence ID" value="TraesPARA_EIv1.0_2663280.1.CDS1"/>
    <property type="gene ID" value="TraesPARA_EIv1.0_2663280"/>
</dbReference>
<dbReference type="EnsemblPlants" id="TraesPARA_EIv1.0_2663780.1">
    <property type="protein sequence ID" value="TraesPARA_EIv1.0_2663780.1.CDS1"/>
    <property type="gene ID" value="TraesPARA_EIv1.0_2663780"/>
</dbReference>
<dbReference type="EnsemblPlants" id="TraesPARA_EIv1.0_2664580.1">
    <property type="protein sequence ID" value="TraesPARA_EIv1.0_2664580.1.CDS1"/>
    <property type="gene ID" value="TraesPARA_EIv1.0_2664580"/>
</dbReference>
<dbReference type="EnsemblPlants" id="TraesPARA_EIv1.0_2665420.1">
    <property type="protein sequence ID" value="TraesPARA_EIv1.0_2665420.1.CDS1"/>
    <property type="gene ID" value="TraesPARA_EIv1.0_2665420"/>
</dbReference>
<dbReference type="EnsemblPlants" id="TraesPARA_EIv1.0_2665490.1">
    <property type="protein sequence ID" value="TraesPARA_EIv1.0_2665490.1.CDS1"/>
    <property type="gene ID" value="TraesPARA_EIv1.0_2665490"/>
</dbReference>
<dbReference type="EnsemblPlants" id="TraesPARA_EIv1.0_2665620.1">
    <property type="protein sequence ID" value="TraesPARA_EIv1.0_2665620.1.CDS1"/>
    <property type="gene ID" value="TraesPARA_EIv1.0_2665620"/>
</dbReference>
<dbReference type="EnsemblPlants" id="TraesPARA_EIv1.0_2666280.1">
    <property type="protein sequence ID" value="TraesPARA_EIv1.0_2666280.1.CDS1"/>
    <property type="gene ID" value="TraesPARA_EIv1.0_2666280"/>
</dbReference>
<dbReference type="EnsemblPlants" id="TraesPARA_EIv1.0_2666540.1">
    <property type="protein sequence ID" value="TraesPARA_EIv1.0_2666540.1.CDS1"/>
    <property type="gene ID" value="TraesPARA_EIv1.0_2666540"/>
</dbReference>
<dbReference type="EnsemblPlants" id="TraesPARA_EIv1.0_2666780.1">
    <property type="protein sequence ID" value="TraesPARA_EIv1.0_2666780.1.CDS1"/>
    <property type="gene ID" value="TraesPARA_EIv1.0_2666780"/>
</dbReference>
<dbReference type="EnsemblPlants" id="TraesPARA_EIv1.0_2667150.1">
    <property type="protein sequence ID" value="TraesPARA_EIv1.0_2667150.1.CDS1"/>
    <property type="gene ID" value="TraesPARA_EIv1.0_2667150"/>
</dbReference>
<dbReference type="EnsemblPlants" id="TraesPARA_EIv1.0_2667860.1">
    <property type="protein sequence ID" value="TraesPARA_EIv1.0_2667860.1.CDS1"/>
    <property type="gene ID" value="TraesPARA_EIv1.0_2667860"/>
</dbReference>
<dbReference type="EnsemblPlants" id="TraesPARA_EIv1.0_2668360.1">
    <property type="protein sequence ID" value="TraesPARA_EIv1.0_2668360.1.CDS1"/>
    <property type="gene ID" value="TraesPARA_EIv1.0_2668360"/>
</dbReference>
<dbReference type="EnsemblPlants" id="TraesPARA_EIv1.0_2668590.1">
    <property type="protein sequence ID" value="TraesPARA_EIv1.0_2668590.1.CDS1"/>
    <property type="gene ID" value="TraesPARA_EIv1.0_2668590"/>
</dbReference>
<dbReference type="EnsemblPlants" id="TraesPARA_EIv1.0_2668740.1">
    <property type="protein sequence ID" value="TraesPARA_EIv1.0_2668740.1.CDS1"/>
    <property type="gene ID" value="TraesPARA_EIv1.0_2668740"/>
</dbReference>
<dbReference type="EnsemblPlants" id="TraesPARA_EIv1.0_2669190.1">
    <property type="protein sequence ID" value="TraesPARA_EIv1.0_2669190.1.CDS1"/>
    <property type="gene ID" value="TraesPARA_EIv1.0_2669190"/>
</dbReference>
<dbReference type="EnsemblPlants" id="TraesPARA_EIv1.0_2669400.1">
    <property type="protein sequence ID" value="TraesPARA_EIv1.0_2669400.1.CDS1"/>
    <property type="gene ID" value="TraesPARA_EIv1.0_2669400"/>
</dbReference>
<dbReference type="EnsemblPlants" id="TraesPARA_EIv1.0_2670130.1">
    <property type="protein sequence ID" value="TraesPARA_EIv1.0_2670130.1.CDS1"/>
    <property type="gene ID" value="TraesPARA_EIv1.0_2670130"/>
</dbReference>
<dbReference type="EnsemblPlants" id="TraesPARA_EIv1.0_2670240.1">
    <property type="protein sequence ID" value="TraesPARA_EIv1.0_2670240.1.CDS1"/>
    <property type="gene ID" value="TraesPARA_EIv1.0_2670240"/>
</dbReference>
<dbReference type="EnsemblPlants" id="TraesPARA_EIv1.0_2671000.1">
    <property type="protein sequence ID" value="TraesPARA_EIv1.0_2671000.1.CDS1"/>
    <property type="gene ID" value="TraesPARA_EIv1.0_2671000"/>
</dbReference>
<dbReference type="EnsemblPlants" id="TraesPARA_EIv1.0_2671390.1">
    <property type="protein sequence ID" value="TraesPARA_EIv1.0_2671390.1.CDS1"/>
    <property type="gene ID" value="TraesPARA_EIv1.0_2671390"/>
</dbReference>
<dbReference type="EnsemblPlants" id="TraesPARA_EIv1.0_2671610.1">
    <property type="protein sequence ID" value="TraesPARA_EIv1.0_2671610.1.CDS1"/>
    <property type="gene ID" value="TraesPARA_EIv1.0_2671610"/>
</dbReference>
<dbReference type="EnsemblPlants" id="TraesPARA_EIv1.0_2671750.1">
    <property type="protein sequence ID" value="TraesPARA_EIv1.0_2671750.1.CDS1"/>
    <property type="gene ID" value="TraesPARA_EIv1.0_2671750"/>
</dbReference>
<dbReference type="EnsemblPlants" id="TraesPARA_EIv1.0_2671890.1">
    <property type="protein sequence ID" value="TraesPARA_EIv1.0_2671890.1.CDS1"/>
    <property type="gene ID" value="TraesPARA_EIv1.0_2671890"/>
</dbReference>
<dbReference type="EnsemblPlants" id="TraesPARA_EIv1.0_2672610.1">
    <property type="protein sequence ID" value="TraesPARA_EIv1.0_2672610.1.CDS1"/>
    <property type="gene ID" value="TraesPARA_EIv1.0_2672610"/>
</dbReference>
<dbReference type="EnsemblPlants" id="TraesPARA_EIv1.0_2672690.1">
    <property type="protein sequence ID" value="TraesPARA_EIv1.0_2672690.1.CDS1"/>
    <property type="gene ID" value="TraesPARA_EIv1.0_2672690"/>
</dbReference>
<dbReference type="EnsemblPlants" id="TraesPARA_EIv1.0_2672780.1">
    <property type="protein sequence ID" value="TraesPARA_EIv1.0_2672780.1.CDS1"/>
    <property type="gene ID" value="TraesPARA_EIv1.0_2672780"/>
</dbReference>
<dbReference type="EnsemblPlants" id="TraesPARA_EIv1.0_2672920.1">
    <property type="protein sequence ID" value="TraesPARA_EIv1.0_2672920.1.CDS1"/>
    <property type="gene ID" value="TraesPARA_EIv1.0_2672920"/>
</dbReference>
<dbReference type="EnsemblPlants" id="TraesPARA_EIv1.0_2673520.1">
    <property type="protein sequence ID" value="TraesPARA_EIv1.0_2673520.1.CDS1"/>
    <property type="gene ID" value="TraesPARA_EIv1.0_2673520"/>
</dbReference>
<dbReference type="EnsemblPlants" id="TraesPARA_EIv1.0_2673850.1">
    <property type="protein sequence ID" value="TraesPARA_EIv1.0_2673850.1.CDS1"/>
    <property type="gene ID" value="TraesPARA_EIv1.0_2673850"/>
</dbReference>
<dbReference type="EnsemblPlants" id="TraesPARA_EIv1.0_2674070.1">
    <property type="protein sequence ID" value="TraesPARA_EIv1.0_2674070.1.CDS1"/>
    <property type="gene ID" value="TraesPARA_EIv1.0_2674070"/>
</dbReference>
<dbReference type="EnsemblPlants" id="TraesPARA_EIv1.0_2674200.1">
    <property type="protein sequence ID" value="TraesPARA_EIv1.0_2674200.1.CDS1"/>
    <property type="gene ID" value="TraesPARA_EIv1.0_2674200"/>
</dbReference>
<dbReference type="EnsemblPlants" id="TraesPARA_EIv1.0_2674350.1">
    <property type="protein sequence ID" value="TraesPARA_EIv1.0_2674350.1.CDS1"/>
    <property type="gene ID" value="TraesPARA_EIv1.0_2674350"/>
</dbReference>
<dbReference type="EnsemblPlants" id="TraesPARA_EIv1.0_2674440.1">
    <property type="protein sequence ID" value="TraesPARA_EIv1.0_2674440.1.CDS1"/>
    <property type="gene ID" value="TraesPARA_EIv1.0_2674440"/>
</dbReference>
<dbReference type="EnsemblPlants" id="TraesPARA_EIv1.0_2674540.1">
    <property type="protein sequence ID" value="TraesPARA_EIv1.0_2674540.1.CDS1"/>
    <property type="gene ID" value="TraesPARA_EIv1.0_2674540"/>
</dbReference>
<dbReference type="EnsemblPlants" id="TraesPARA_EIv1.0_2675030.1">
    <property type="protein sequence ID" value="TraesPARA_EIv1.0_2675030.1.CDS1"/>
    <property type="gene ID" value="TraesPARA_EIv1.0_2675030"/>
</dbReference>
<dbReference type="EnsemblPlants" id="TraesPARA_EIv1.0_2675150.1">
    <property type="protein sequence ID" value="TraesPARA_EIv1.0_2675150.1.CDS1"/>
    <property type="gene ID" value="TraesPARA_EIv1.0_2675150"/>
</dbReference>
<dbReference type="EnsemblPlants" id="TraesPARA_EIv1.0_2675280.1">
    <property type="protein sequence ID" value="TraesPARA_EIv1.0_2675280.1.CDS1"/>
    <property type="gene ID" value="TraesPARA_EIv1.0_2675280"/>
</dbReference>
<dbReference type="EnsemblPlants" id="TraesPARA_EIv1.0_2676390.1">
    <property type="protein sequence ID" value="TraesPARA_EIv1.0_2676390.1.CDS1"/>
    <property type="gene ID" value="TraesPARA_EIv1.0_2676390"/>
</dbReference>
<dbReference type="EnsemblPlants" id="TraesPARA_EIv1.0_2677030.1">
    <property type="protein sequence ID" value="TraesPARA_EIv1.0_2677030.1.CDS1"/>
    <property type="gene ID" value="TraesPARA_EIv1.0_2677030"/>
</dbReference>
<dbReference type="EnsemblPlants" id="TraesPARA_EIv1.0_2677090.1">
    <property type="protein sequence ID" value="TraesPARA_EIv1.0_2677090.1.CDS1"/>
    <property type="gene ID" value="TraesPARA_EIv1.0_2677090"/>
</dbReference>
<dbReference type="EnsemblPlants" id="TraesPARA_EIv1.0_2677370.1">
    <property type="protein sequence ID" value="TraesPARA_EIv1.0_2677370.1.CDS1"/>
    <property type="gene ID" value="TraesPARA_EIv1.0_2677370"/>
</dbReference>
<dbReference type="EnsemblPlants" id="TraesPARA_EIv1.0_2677660.1">
    <property type="protein sequence ID" value="TraesPARA_EIv1.0_2677660.1.CDS1"/>
    <property type="gene ID" value="TraesPARA_EIv1.0_2677660"/>
</dbReference>
<dbReference type="EnsemblPlants" id="TraesPARA_EIv1.0_2679010.1">
    <property type="protein sequence ID" value="TraesPARA_EIv1.0_2679010.1.CDS1"/>
    <property type="gene ID" value="TraesPARA_EIv1.0_2679010"/>
</dbReference>
<dbReference type="EnsemblPlants" id="TraesPARA_EIv1.0_2679980.1">
    <property type="protein sequence ID" value="TraesPARA_EIv1.0_2679980.1.CDS1"/>
    <property type="gene ID" value="TraesPARA_EIv1.0_2679980"/>
</dbReference>
<dbReference type="EnsemblPlants" id="TraesPARA_EIv1.0_2680330.1">
    <property type="protein sequence ID" value="TraesPARA_EIv1.0_2680330.1.CDS1"/>
    <property type="gene ID" value="TraesPARA_EIv1.0_2680330"/>
</dbReference>
<dbReference type="EnsemblPlants" id="TraesPARA_EIv1.0_2680610.1">
    <property type="protein sequence ID" value="TraesPARA_EIv1.0_2680610.1.CDS1"/>
    <property type="gene ID" value="TraesPARA_EIv1.0_2680610"/>
</dbReference>
<dbReference type="EnsemblPlants" id="TraesPARA_EIv1.0_2680910.1">
    <property type="protein sequence ID" value="TraesPARA_EIv1.0_2680910.1.CDS1"/>
    <property type="gene ID" value="TraesPARA_EIv1.0_2680910"/>
</dbReference>
<dbReference type="EnsemblPlants" id="TraesPARA_EIv1.0_2681040.1">
    <property type="protein sequence ID" value="TraesPARA_EIv1.0_2681040.1.CDS1"/>
    <property type="gene ID" value="TraesPARA_EIv1.0_2681040"/>
</dbReference>
<dbReference type="EnsemblPlants" id="TraesPARA_EIv1.0_2681270.1">
    <property type="protein sequence ID" value="TraesPARA_EIv1.0_2681270.1.CDS1"/>
    <property type="gene ID" value="TraesPARA_EIv1.0_2681270"/>
</dbReference>
<dbReference type="EnsemblPlants" id="TraesPARA_EIv1.0_2681360.1">
    <property type="protein sequence ID" value="TraesPARA_EIv1.0_2681360.1.CDS1"/>
    <property type="gene ID" value="TraesPARA_EIv1.0_2681360"/>
</dbReference>
<dbReference type="EnsemblPlants" id="TraesPARA_EIv1.0_2681580.1">
    <property type="protein sequence ID" value="TraesPARA_EIv1.0_2681580.1.CDS1"/>
    <property type="gene ID" value="TraesPARA_EIv1.0_2681580"/>
</dbReference>
<dbReference type="GeneID" id="803119"/>
<dbReference type="Gramene" id="TraesKAR6B01G0220010.1">
    <property type="protein sequence ID" value="cds.TraesKAR6B01G0220010.1"/>
    <property type="gene ID" value="TraesKAR6B01G0220010"/>
</dbReference>
<dbReference type="Gramene" id="TraesKARUn01G0067040.1">
    <property type="protein sequence ID" value="cds.TraesKARUn01G0067040.1"/>
    <property type="gene ID" value="TraesKARUn01G0067040"/>
</dbReference>
<dbReference type="Gramene" id="TraesKARUn01G0077270.1">
    <property type="protein sequence ID" value="cds.TraesKARUn01G0077270.1"/>
    <property type="gene ID" value="TraesKARUn01G0077270"/>
</dbReference>
<dbReference type="Gramene" id="TraesKARUn01G0079520.1">
    <property type="protein sequence ID" value="cds.TraesKARUn01G0079520.1"/>
    <property type="gene ID" value="TraesKARUn01G0079520"/>
</dbReference>
<dbReference type="Gramene" id="TraesKARUn01G0080990.1">
    <property type="protein sequence ID" value="cds.TraesKARUn01G0080990.1"/>
    <property type="gene ID" value="TraesKARUn01G0080990"/>
</dbReference>
<dbReference type="Gramene" id="TraesKARUn01G0085650.1">
    <property type="protein sequence ID" value="cds.TraesKARUn01G0085650.1"/>
    <property type="gene ID" value="TraesKARUn01G0085650"/>
</dbReference>
<dbReference type="Gramene" id="TraesKARUn01G0087050.1">
    <property type="protein sequence ID" value="cds.TraesKARUn01G0087050.1"/>
    <property type="gene ID" value="TraesKARUn01G0087050"/>
</dbReference>
<dbReference type="Gramene" id="TraesKARUn01G0087400.1">
    <property type="protein sequence ID" value="cds.TraesKARUn01G0087400.1"/>
    <property type="gene ID" value="TraesKARUn01G0087400"/>
</dbReference>
<dbReference type="Gramene" id="TraesKARUn01G0087760.1">
    <property type="protein sequence ID" value="cds.TraesKARUn01G0087760.1"/>
    <property type="gene ID" value="TraesKARUn01G0087760"/>
</dbReference>
<dbReference type="Gramene" id="TraesKARUn01G0090500.1">
    <property type="protein sequence ID" value="cds.TraesKARUn01G0090500.1"/>
    <property type="gene ID" value="TraesKARUn01G0090500"/>
</dbReference>
<dbReference type="Gramene" id="TraesKARUn01G0097600.1">
    <property type="protein sequence ID" value="cds.TraesKARUn01G0097600.1"/>
    <property type="gene ID" value="TraesKARUn01G0097600"/>
</dbReference>
<dbReference type="Gramene" id="TraesKARUn01G0097930.1">
    <property type="protein sequence ID" value="cds.TraesKARUn01G0097930.1"/>
    <property type="gene ID" value="TraesKARUn01G0097930"/>
</dbReference>
<dbReference type="Gramene" id="TraesKARUn01G0098360.1">
    <property type="protein sequence ID" value="cds.TraesKARUn01G0098360.1"/>
    <property type="gene ID" value="TraesKARUn01G0098360"/>
</dbReference>
<dbReference type="Gramene" id="TraesKARUn01G0098930.1">
    <property type="protein sequence ID" value="cds.TraesKARUn01G0098930.1"/>
    <property type="gene ID" value="TraesKARUn01G0098930"/>
</dbReference>
<dbReference type="Gramene" id="TraesKARUn01G0099570.1">
    <property type="protein sequence ID" value="cds.TraesKARUn01G0099570.1"/>
    <property type="gene ID" value="TraesKARUn01G0099570"/>
</dbReference>
<dbReference type="Gramene" id="TraesKARUn01G0103070.1">
    <property type="protein sequence ID" value="cds.TraesKARUn01G0103070.1"/>
    <property type="gene ID" value="TraesKARUn01G0103070"/>
</dbReference>
<dbReference type="Gramene" id="TraesKARUn01G0103300.1">
    <property type="protein sequence ID" value="cds.TraesKARUn01G0103300.1"/>
    <property type="gene ID" value="TraesKARUn01G0103300"/>
</dbReference>
<dbReference type="Gramene" id="TraesKARUn01G0103650.1">
    <property type="protein sequence ID" value="cds.TraesKARUn01G0103650.1"/>
    <property type="gene ID" value="TraesKARUn01G0103650"/>
</dbReference>
<dbReference type="Gramene" id="TraesKARUn01G0108780.1">
    <property type="protein sequence ID" value="cds.TraesKARUn01G0108780.1"/>
    <property type="gene ID" value="TraesKARUn01G0108780"/>
</dbReference>
<dbReference type="Gramene" id="TraesKARUn01G0127650.1">
    <property type="protein sequence ID" value="cds.TraesKARUn01G0127650.1"/>
    <property type="gene ID" value="TraesKARUn01G0127650"/>
</dbReference>
<dbReference type="Gramene" id="TraesKARUn01G0155710.1">
    <property type="protein sequence ID" value="cds.TraesKARUn01G0155710.1"/>
    <property type="gene ID" value="TraesKARUn01G0155710"/>
</dbReference>
<dbReference type="Gramene" id="TraesKARUn01G0168870.1">
    <property type="protein sequence ID" value="cds.TraesKARUn01G0168870.1"/>
    <property type="gene ID" value="TraesKARUn01G0168870"/>
</dbReference>
<dbReference type="Gramene" id="TraesKARUn01G0171400.1">
    <property type="protein sequence ID" value="cds.TraesKARUn01G0171400.1"/>
    <property type="gene ID" value="TraesKARUn01G0171400"/>
</dbReference>
<dbReference type="Gramene" id="TraesKARUn01G0172070.1">
    <property type="protein sequence ID" value="cds.TraesKARUn01G0172070.1"/>
    <property type="gene ID" value="TraesKARUn01G0172070"/>
</dbReference>
<dbReference type="Gramene" id="TraesKARUn01G0172570.1">
    <property type="protein sequence ID" value="cds.TraesKARUn01G0172570.1"/>
    <property type="gene ID" value="TraesKARUn01G0172570"/>
</dbReference>
<dbReference type="Gramene" id="TraesKARUn01G0173540.1">
    <property type="protein sequence ID" value="cds.TraesKARUn01G0173540.1"/>
    <property type="gene ID" value="TraesKARUn01G0173540"/>
</dbReference>
<dbReference type="Gramene" id="TraesKARUn01G0175060.1">
    <property type="protein sequence ID" value="cds.TraesKARUn01G0175060.1"/>
    <property type="gene ID" value="TraesKARUn01G0175060"/>
</dbReference>
<dbReference type="Gramene" id="TraesKARUn01G0175190.1">
    <property type="protein sequence ID" value="cds.TraesKARUn01G0175190.1"/>
    <property type="gene ID" value="TraesKARUn01G0175190"/>
</dbReference>
<dbReference type="Gramene" id="TraesKARUn01G0175940.1">
    <property type="protein sequence ID" value="cds.TraesKARUn01G0175940.1"/>
    <property type="gene ID" value="TraesKARUn01G0175940"/>
</dbReference>
<dbReference type="Gramene" id="TraesKARUn01G0180520.1">
    <property type="protein sequence ID" value="cds.TraesKARUn01G0180520.1"/>
    <property type="gene ID" value="TraesKARUn01G0180520"/>
</dbReference>
<dbReference type="Gramene" id="TraesKARUn01G0186290.1">
    <property type="protein sequence ID" value="cds.TraesKARUn01G0186290.1"/>
    <property type="gene ID" value="TraesKARUn01G0186290"/>
</dbReference>
<dbReference type="Gramene" id="TraesKARUn01G0186920.1">
    <property type="protein sequence ID" value="cds.TraesKARUn01G0186920.1"/>
    <property type="gene ID" value="TraesKARUn01G0186920"/>
</dbReference>
<dbReference type="Gramene" id="TraesKARUn01G0194600.1">
    <property type="protein sequence ID" value="cds.TraesKARUn01G0194600.1"/>
    <property type="gene ID" value="TraesKARUn01G0194600"/>
</dbReference>
<dbReference type="Gramene" id="TraesPARA_EIv1.0_2014360.1">
    <property type="protein sequence ID" value="TraesPARA_EIv1.0_2014360.1.CDS1"/>
    <property type="gene ID" value="TraesPARA_EIv1.0_2014360"/>
</dbReference>
<dbReference type="Gramene" id="TraesPARA_EIv1.0_2643700.1">
    <property type="protein sequence ID" value="TraesPARA_EIv1.0_2643700.1.CDS1"/>
    <property type="gene ID" value="TraesPARA_EIv1.0_2643700"/>
</dbReference>
<dbReference type="Gramene" id="TraesPARA_EIv1.0_2644040.1">
    <property type="protein sequence ID" value="TraesPARA_EIv1.0_2644040.1.CDS1"/>
    <property type="gene ID" value="TraesPARA_EIv1.0_2644040"/>
</dbReference>
<dbReference type="Gramene" id="TraesPARA_EIv1.0_2644200.1">
    <property type="protein sequence ID" value="TraesPARA_EIv1.0_2644200.1.CDS1"/>
    <property type="gene ID" value="TraesPARA_EIv1.0_2644200"/>
</dbReference>
<dbReference type="Gramene" id="TraesPARA_EIv1.0_2644720.1">
    <property type="protein sequence ID" value="TraesPARA_EIv1.0_2644720.1.CDS1"/>
    <property type="gene ID" value="TraesPARA_EIv1.0_2644720"/>
</dbReference>
<dbReference type="Gramene" id="TraesPARA_EIv1.0_2645110.1">
    <property type="protein sequence ID" value="TraesPARA_EIv1.0_2645110.1.CDS1"/>
    <property type="gene ID" value="TraesPARA_EIv1.0_2645110"/>
</dbReference>
<dbReference type="Gramene" id="TraesPARA_EIv1.0_2645260.1">
    <property type="protein sequence ID" value="TraesPARA_EIv1.0_2645260.1.CDS1"/>
    <property type="gene ID" value="TraesPARA_EIv1.0_2645260"/>
</dbReference>
<dbReference type="Gramene" id="TraesPARA_EIv1.0_2645660.1">
    <property type="protein sequence ID" value="TraesPARA_EIv1.0_2645660.1.CDS1"/>
    <property type="gene ID" value="TraesPARA_EIv1.0_2645660"/>
</dbReference>
<dbReference type="Gramene" id="TraesPARA_EIv1.0_2645830.1">
    <property type="protein sequence ID" value="TraesPARA_EIv1.0_2645830.1.CDS1"/>
    <property type="gene ID" value="TraesPARA_EIv1.0_2645830"/>
</dbReference>
<dbReference type="Gramene" id="TraesPARA_EIv1.0_2645970.1">
    <property type="protein sequence ID" value="TraesPARA_EIv1.0_2645970.1.CDS1"/>
    <property type="gene ID" value="TraesPARA_EIv1.0_2645970"/>
</dbReference>
<dbReference type="Gramene" id="TraesPARA_EIv1.0_2646630.1">
    <property type="protein sequence ID" value="TraesPARA_EIv1.0_2646630.1.CDS1"/>
    <property type="gene ID" value="TraesPARA_EIv1.0_2646630"/>
</dbReference>
<dbReference type="Gramene" id="TraesPARA_EIv1.0_2646840.1">
    <property type="protein sequence ID" value="TraesPARA_EIv1.0_2646840.1.CDS1"/>
    <property type="gene ID" value="TraesPARA_EIv1.0_2646840"/>
</dbReference>
<dbReference type="Gramene" id="TraesPARA_EIv1.0_2646980.1">
    <property type="protein sequence ID" value="TraesPARA_EIv1.0_2646980.1.CDS1"/>
    <property type="gene ID" value="TraesPARA_EIv1.0_2646980"/>
</dbReference>
<dbReference type="Gramene" id="TraesPARA_EIv1.0_2647140.1">
    <property type="protein sequence ID" value="TraesPARA_EIv1.0_2647140.1.CDS1"/>
    <property type="gene ID" value="TraesPARA_EIv1.0_2647140"/>
</dbReference>
<dbReference type="Gramene" id="TraesPARA_EIv1.0_2647660.1">
    <property type="protein sequence ID" value="TraesPARA_EIv1.0_2647660.1.CDS1"/>
    <property type="gene ID" value="TraesPARA_EIv1.0_2647660"/>
</dbReference>
<dbReference type="Gramene" id="TraesPARA_EIv1.0_2647810.1">
    <property type="protein sequence ID" value="TraesPARA_EIv1.0_2647810.1.CDS1"/>
    <property type="gene ID" value="TraesPARA_EIv1.0_2647810"/>
</dbReference>
<dbReference type="Gramene" id="TraesPARA_EIv1.0_2647950.1">
    <property type="protein sequence ID" value="TraesPARA_EIv1.0_2647950.1.CDS1"/>
    <property type="gene ID" value="TraesPARA_EIv1.0_2647950"/>
</dbReference>
<dbReference type="Gramene" id="TraesPARA_EIv1.0_2648410.1">
    <property type="protein sequence ID" value="TraesPARA_EIv1.0_2648410.1.CDS1"/>
    <property type="gene ID" value="TraesPARA_EIv1.0_2648410"/>
</dbReference>
<dbReference type="Gramene" id="TraesPARA_EIv1.0_2648630.1">
    <property type="protein sequence ID" value="TraesPARA_EIv1.0_2648630.1.CDS1"/>
    <property type="gene ID" value="TraesPARA_EIv1.0_2648630"/>
</dbReference>
<dbReference type="Gramene" id="TraesPARA_EIv1.0_2648800.1">
    <property type="protein sequence ID" value="TraesPARA_EIv1.0_2648800.1.CDS1"/>
    <property type="gene ID" value="TraesPARA_EIv1.0_2648800"/>
</dbReference>
<dbReference type="Gramene" id="TraesPARA_EIv1.0_2648900.1">
    <property type="protein sequence ID" value="TraesPARA_EIv1.0_2648900.1.CDS1"/>
    <property type="gene ID" value="TraesPARA_EIv1.0_2648900"/>
</dbReference>
<dbReference type="Gramene" id="TraesPARA_EIv1.0_2649290.1">
    <property type="protein sequence ID" value="TraesPARA_EIv1.0_2649290.1.CDS1"/>
    <property type="gene ID" value="TraesPARA_EIv1.0_2649290"/>
</dbReference>
<dbReference type="Gramene" id="TraesPARA_EIv1.0_2649590.1">
    <property type="protein sequence ID" value="TraesPARA_EIv1.0_2649590.1.CDS1"/>
    <property type="gene ID" value="TraesPARA_EIv1.0_2649590"/>
</dbReference>
<dbReference type="Gramene" id="TraesPARA_EIv1.0_2649700.1">
    <property type="protein sequence ID" value="TraesPARA_EIv1.0_2649700.1.CDS1"/>
    <property type="gene ID" value="TraesPARA_EIv1.0_2649700"/>
</dbReference>
<dbReference type="Gramene" id="TraesPARA_EIv1.0_2650160.1">
    <property type="protein sequence ID" value="TraesPARA_EIv1.0_2650160.1.CDS1"/>
    <property type="gene ID" value="TraesPARA_EIv1.0_2650160"/>
</dbReference>
<dbReference type="Gramene" id="TraesPARA_EIv1.0_2650370.1">
    <property type="protein sequence ID" value="TraesPARA_EIv1.0_2650370.1.CDS1"/>
    <property type="gene ID" value="TraesPARA_EIv1.0_2650370"/>
</dbReference>
<dbReference type="Gramene" id="TraesPARA_EIv1.0_2650550.1">
    <property type="protein sequence ID" value="TraesPARA_EIv1.0_2650550.1.CDS1"/>
    <property type="gene ID" value="TraesPARA_EIv1.0_2650550"/>
</dbReference>
<dbReference type="Gramene" id="TraesPARA_EIv1.0_2650670.1">
    <property type="protein sequence ID" value="TraesPARA_EIv1.0_2650670.1.CDS1"/>
    <property type="gene ID" value="TraesPARA_EIv1.0_2650670"/>
</dbReference>
<dbReference type="Gramene" id="TraesPARA_EIv1.0_2651300.1">
    <property type="protein sequence ID" value="TraesPARA_EIv1.0_2651300.1.CDS1"/>
    <property type="gene ID" value="TraesPARA_EIv1.0_2651300"/>
</dbReference>
<dbReference type="Gramene" id="TraesPARA_EIv1.0_2651960.1">
    <property type="protein sequence ID" value="TraesPARA_EIv1.0_2651960.1.CDS1"/>
    <property type="gene ID" value="TraesPARA_EIv1.0_2651960"/>
</dbReference>
<dbReference type="Gramene" id="TraesPARA_EIv1.0_2652070.1">
    <property type="protein sequence ID" value="TraesPARA_EIv1.0_2652070.1.CDS1"/>
    <property type="gene ID" value="TraesPARA_EIv1.0_2652070"/>
</dbReference>
<dbReference type="Gramene" id="TraesPARA_EIv1.0_2652230.1">
    <property type="protein sequence ID" value="TraesPARA_EIv1.0_2652230.1.CDS1"/>
    <property type="gene ID" value="TraesPARA_EIv1.0_2652230"/>
</dbReference>
<dbReference type="Gramene" id="TraesPARA_EIv1.0_2652410.1">
    <property type="protein sequence ID" value="TraesPARA_EIv1.0_2652410.1.CDS1"/>
    <property type="gene ID" value="TraesPARA_EIv1.0_2652410"/>
</dbReference>
<dbReference type="Gramene" id="TraesPARA_EIv1.0_2652640.1">
    <property type="protein sequence ID" value="TraesPARA_EIv1.0_2652640.1.CDS1"/>
    <property type="gene ID" value="TraesPARA_EIv1.0_2652640"/>
</dbReference>
<dbReference type="Gramene" id="TraesPARA_EIv1.0_2652930.1">
    <property type="protein sequence ID" value="TraesPARA_EIv1.0_2652930.1.CDS1"/>
    <property type="gene ID" value="TraesPARA_EIv1.0_2652930"/>
</dbReference>
<dbReference type="Gramene" id="TraesPARA_EIv1.0_2653080.1">
    <property type="protein sequence ID" value="TraesPARA_EIv1.0_2653080.1.CDS1"/>
    <property type="gene ID" value="TraesPARA_EIv1.0_2653080"/>
</dbReference>
<dbReference type="Gramene" id="TraesPARA_EIv1.0_2653310.1">
    <property type="protein sequence ID" value="TraesPARA_EIv1.0_2653310.1.CDS1"/>
    <property type="gene ID" value="TraesPARA_EIv1.0_2653310"/>
</dbReference>
<dbReference type="Gramene" id="TraesPARA_EIv1.0_2653440.1">
    <property type="protein sequence ID" value="TraesPARA_EIv1.0_2653440.1.CDS1"/>
    <property type="gene ID" value="TraesPARA_EIv1.0_2653440"/>
</dbReference>
<dbReference type="Gramene" id="TraesPARA_EIv1.0_2653690.1">
    <property type="protein sequence ID" value="TraesPARA_EIv1.0_2653690.1.CDS1"/>
    <property type="gene ID" value="TraesPARA_EIv1.0_2653690"/>
</dbReference>
<dbReference type="Gramene" id="TraesPARA_EIv1.0_2653780.1">
    <property type="protein sequence ID" value="TraesPARA_EIv1.0_2653780.1.CDS1"/>
    <property type="gene ID" value="TraesPARA_EIv1.0_2653780"/>
</dbReference>
<dbReference type="Gramene" id="TraesPARA_EIv1.0_2654540.1">
    <property type="protein sequence ID" value="TraesPARA_EIv1.0_2654540.1.CDS1"/>
    <property type="gene ID" value="TraesPARA_EIv1.0_2654540"/>
</dbReference>
<dbReference type="Gramene" id="TraesPARA_EIv1.0_2654700.1">
    <property type="protein sequence ID" value="TraesPARA_EIv1.0_2654700.1.CDS1"/>
    <property type="gene ID" value="TraesPARA_EIv1.0_2654700"/>
</dbReference>
<dbReference type="Gramene" id="TraesPARA_EIv1.0_2655310.1">
    <property type="protein sequence ID" value="TraesPARA_EIv1.0_2655310.1.CDS1"/>
    <property type="gene ID" value="TraesPARA_EIv1.0_2655310"/>
</dbReference>
<dbReference type="Gramene" id="TraesPARA_EIv1.0_2655550.1">
    <property type="protein sequence ID" value="TraesPARA_EIv1.0_2655550.1.CDS1"/>
    <property type="gene ID" value="TraesPARA_EIv1.0_2655550"/>
</dbReference>
<dbReference type="Gramene" id="TraesPARA_EIv1.0_2655770.1">
    <property type="protein sequence ID" value="TraesPARA_EIv1.0_2655770.1.CDS1"/>
    <property type="gene ID" value="TraesPARA_EIv1.0_2655770"/>
</dbReference>
<dbReference type="Gramene" id="TraesPARA_EIv1.0_2655890.1">
    <property type="protein sequence ID" value="TraesPARA_EIv1.0_2655890.1.CDS1"/>
    <property type="gene ID" value="TraesPARA_EIv1.0_2655890"/>
</dbReference>
<dbReference type="Gramene" id="TraesPARA_EIv1.0_2656170.1">
    <property type="protein sequence ID" value="TraesPARA_EIv1.0_2656170.1.CDS1"/>
    <property type="gene ID" value="TraesPARA_EIv1.0_2656170"/>
</dbReference>
<dbReference type="Gramene" id="TraesPARA_EIv1.0_2656970.1">
    <property type="protein sequence ID" value="TraesPARA_EIv1.0_2656970.1.CDS1"/>
    <property type="gene ID" value="TraesPARA_EIv1.0_2656970"/>
</dbReference>
<dbReference type="Gramene" id="TraesPARA_EIv1.0_2657210.1">
    <property type="protein sequence ID" value="TraesPARA_EIv1.0_2657210.1.CDS1"/>
    <property type="gene ID" value="TraesPARA_EIv1.0_2657210"/>
</dbReference>
<dbReference type="Gramene" id="TraesPARA_EIv1.0_2658200.1">
    <property type="protein sequence ID" value="TraesPARA_EIv1.0_2658200.1.CDS1"/>
    <property type="gene ID" value="TraesPARA_EIv1.0_2658200"/>
</dbReference>
<dbReference type="Gramene" id="TraesPARA_EIv1.0_2658420.1">
    <property type="protein sequence ID" value="TraesPARA_EIv1.0_2658420.1.CDS1"/>
    <property type="gene ID" value="TraesPARA_EIv1.0_2658420"/>
</dbReference>
<dbReference type="Gramene" id="TraesPARA_EIv1.0_2660130.1">
    <property type="protein sequence ID" value="TraesPARA_EIv1.0_2660130.1.CDS1"/>
    <property type="gene ID" value="TraesPARA_EIv1.0_2660130"/>
</dbReference>
<dbReference type="Gramene" id="TraesPARA_EIv1.0_2660450.1">
    <property type="protein sequence ID" value="TraesPARA_EIv1.0_2660450.1.CDS1"/>
    <property type="gene ID" value="TraesPARA_EIv1.0_2660450"/>
</dbReference>
<dbReference type="Gramene" id="TraesPARA_EIv1.0_2662860.1">
    <property type="protein sequence ID" value="TraesPARA_EIv1.0_2662860.1.CDS1"/>
    <property type="gene ID" value="TraesPARA_EIv1.0_2662860"/>
</dbReference>
<dbReference type="Gramene" id="TraesPARA_EIv1.0_2663280.1">
    <property type="protein sequence ID" value="TraesPARA_EIv1.0_2663280.1.CDS1"/>
    <property type="gene ID" value="TraesPARA_EIv1.0_2663280"/>
</dbReference>
<dbReference type="Gramene" id="TraesPARA_EIv1.0_2663780.1">
    <property type="protein sequence ID" value="TraesPARA_EIv1.0_2663780.1.CDS1"/>
    <property type="gene ID" value="TraesPARA_EIv1.0_2663780"/>
</dbReference>
<dbReference type="Gramene" id="TraesPARA_EIv1.0_2664580.1">
    <property type="protein sequence ID" value="TraesPARA_EIv1.0_2664580.1.CDS1"/>
    <property type="gene ID" value="TraesPARA_EIv1.0_2664580"/>
</dbReference>
<dbReference type="Gramene" id="TraesPARA_EIv1.0_2665420.1">
    <property type="protein sequence ID" value="TraesPARA_EIv1.0_2665420.1.CDS1"/>
    <property type="gene ID" value="TraesPARA_EIv1.0_2665420"/>
</dbReference>
<dbReference type="Gramene" id="TraesPARA_EIv1.0_2665490.1">
    <property type="protein sequence ID" value="TraesPARA_EIv1.0_2665490.1.CDS1"/>
    <property type="gene ID" value="TraesPARA_EIv1.0_2665490"/>
</dbReference>
<dbReference type="Gramene" id="TraesPARA_EIv1.0_2665620.1">
    <property type="protein sequence ID" value="TraesPARA_EIv1.0_2665620.1.CDS1"/>
    <property type="gene ID" value="TraesPARA_EIv1.0_2665620"/>
</dbReference>
<dbReference type="Gramene" id="TraesPARA_EIv1.0_2666280.1">
    <property type="protein sequence ID" value="TraesPARA_EIv1.0_2666280.1.CDS1"/>
    <property type="gene ID" value="TraesPARA_EIv1.0_2666280"/>
</dbReference>
<dbReference type="Gramene" id="TraesPARA_EIv1.0_2666540.1">
    <property type="protein sequence ID" value="TraesPARA_EIv1.0_2666540.1.CDS1"/>
    <property type="gene ID" value="TraesPARA_EIv1.0_2666540"/>
</dbReference>
<dbReference type="Gramene" id="TraesPARA_EIv1.0_2666780.1">
    <property type="protein sequence ID" value="TraesPARA_EIv1.0_2666780.1.CDS1"/>
    <property type="gene ID" value="TraesPARA_EIv1.0_2666780"/>
</dbReference>
<dbReference type="Gramene" id="TraesPARA_EIv1.0_2667150.1">
    <property type="protein sequence ID" value="TraesPARA_EIv1.0_2667150.1.CDS1"/>
    <property type="gene ID" value="TraesPARA_EIv1.0_2667150"/>
</dbReference>
<dbReference type="Gramene" id="TraesPARA_EIv1.0_2667860.1">
    <property type="protein sequence ID" value="TraesPARA_EIv1.0_2667860.1.CDS1"/>
    <property type="gene ID" value="TraesPARA_EIv1.0_2667860"/>
</dbReference>
<dbReference type="Gramene" id="TraesPARA_EIv1.0_2668360.1">
    <property type="protein sequence ID" value="TraesPARA_EIv1.0_2668360.1.CDS1"/>
    <property type="gene ID" value="TraesPARA_EIv1.0_2668360"/>
</dbReference>
<dbReference type="Gramene" id="TraesPARA_EIv1.0_2668590.1">
    <property type="protein sequence ID" value="TraesPARA_EIv1.0_2668590.1.CDS1"/>
    <property type="gene ID" value="TraesPARA_EIv1.0_2668590"/>
</dbReference>
<dbReference type="Gramene" id="TraesPARA_EIv1.0_2668740.1">
    <property type="protein sequence ID" value="TraesPARA_EIv1.0_2668740.1.CDS1"/>
    <property type="gene ID" value="TraesPARA_EIv1.0_2668740"/>
</dbReference>
<dbReference type="Gramene" id="TraesPARA_EIv1.0_2669190.1">
    <property type="protein sequence ID" value="TraesPARA_EIv1.0_2669190.1.CDS1"/>
    <property type="gene ID" value="TraesPARA_EIv1.0_2669190"/>
</dbReference>
<dbReference type="Gramene" id="TraesPARA_EIv1.0_2669400.1">
    <property type="protein sequence ID" value="TraesPARA_EIv1.0_2669400.1.CDS1"/>
    <property type="gene ID" value="TraesPARA_EIv1.0_2669400"/>
</dbReference>
<dbReference type="Gramene" id="TraesPARA_EIv1.0_2670130.1">
    <property type="protein sequence ID" value="TraesPARA_EIv1.0_2670130.1.CDS1"/>
    <property type="gene ID" value="TraesPARA_EIv1.0_2670130"/>
</dbReference>
<dbReference type="Gramene" id="TraesPARA_EIv1.0_2670240.1">
    <property type="protein sequence ID" value="TraesPARA_EIv1.0_2670240.1.CDS1"/>
    <property type="gene ID" value="TraesPARA_EIv1.0_2670240"/>
</dbReference>
<dbReference type="Gramene" id="TraesPARA_EIv1.0_2671000.1">
    <property type="protein sequence ID" value="TraesPARA_EIv1.0_2671000.1.CDS1"/>
    <property type="gene ID" value="TraesPARA_EIv1.0_2671000"/>
</dbReference>
<dbReference type="Gramene" id="TraesPARA_EIv1.0_2671390.1">
    <property type="protein sequence ID" value="TraesPARA_EIv1.0_2671390.1.CDS1"/>
    <property type="gene ID" value="TraesPARA_EIv1.0_2671390"/>
</dbReference>
<dbReference type="Gramene" id="TraesPARA_EIv1.0_2671610.1">
    <property type="protein sequence ID" value="TraesPARA_EIv1.0_2671610.1.CDS1"/>
    <property type="gene ID" value="TraesPARA_EIv1.0_2671610"/>
</dbReference>
<dbReference type="Gramene" id="TraesPARA_EIv1.0_2671750.1">
    <property type="protein sequence ID" value="TraesPARA_EIv1.0_2671750.1.CDS1"/>
    <property type="gene ID" value="TraesPARA_EIv1.0_2671750"/>
</dbReference>
<dbReference type="Gramene" id="TraesPARA_EIv1.0_2671890.1">
    <property type="protein sequence ID" value="TraesPARA_EIv1.0_2671890.1.CDS1"/>
    <property type="gene ID" value="TraesPARA_EIv1.0_2671890"/>
</dbReference>
<dbReference type="Gramene" id="TraesPARA_EIv1.0_2672610.1">
    <property type="protein sequence ID" value="TraesPARA_EIv1.0_2672610.1.CDS1"/>
    <property type="gene ID" value="TraesPARA_EIv1.0_2672610"/>
</dbReference>
<dbReference type="Gramene" id="TraesPARA_EIv1.0_2672690.1">
    <property type="protein sequence ID" value="TraesPARA_EIv1.0_2672690.1.CDS1"/>
    <property type="gene ID" value="TraesPARA_EIv1.0_2672690"/>
</dbReference>
<dbReference type="Gramene" id="TraesPARA_EIv1.0_2672780.1">
    <property type="protein sequence ID" value="TraesPARA_EIv1.0_2672780.1.CDS1"/>
    <property type="gene ID" value="TraesPARA_EIv1.0_2672780"/>
</dbReference>
<dbReference type="Gramene" id="TraesPARA_EIv1.0_2672920.1">
    <property type="protein sequence ID" value="TraesPARA_EIv1.0_2672920.1.CDS1"/>
    <property type="gene ID" value="TraesPARA_EIv1.0_2672920"/>
</dbReference>
<dbReference type="Gramene" id="TraesPARA_EIv1.0_2673520.1">
    <property type="protein sequence ID" value="TraesPARA_EIv1.0_2673520.1.CDS1"/>
    <property type="gene ID" value="TraesPARA_EIv1.0_2673520"/>
</dbReference>
<dbReference type="Gramene" id="TraesPARA_EIv1.0_2673850.1">
    <property type="protein sequence ID" value="TraesPARA_EIv1.0_2673850.1.CDS1"/>
    <property type="gene ID" value="TraesPARA_EIv1.0_2673850"/>
</dbReference>
<dbReference type="Gramene" id="TraesPARA_EIv1.0_2674070.1">
    <property type="protein sequence ID" value="TraesPARA_EIv1.0_2674070.1.CDS1"/>
    <property type="gene ID" value="TraesPARA_EIv1.0_2674070"/>
</dbReference>
<dbReference type="Gramene" id="TraesPARA_EIv1.0_2674200.1">
    <property type="protein sequence ID" value="TraesPARA_EIv1.0_2674200.1.CDS1"/>
    <property type="gene ID" value="TraesPARA_EIv1.0_2674200"/>
</dbReference>
<dbReference type="Gramene" id="TraesPARA_EIv1.0_2674350.1">
    <property type="protein sequence ID" value="TraesPARA_EIv1.0_2674350.1.CDS1"/>
    <property type="gene ID" value="TraesPARA_EIv1.0_2674350"/>
</dbReference>
<dbReference type="Gramene" id="TraesPARA_EIv1.0_2674440.1">
    <property type="protein sequence ID" value="TraesPARA_EIv1.0_2674440.1.CDS1"/>
    <property type="gene ID" value="TraesPARA_EIv1.0_2674440"/>
</dbReference>
<dbReference type="Gramene" id="TraesPARA_EIv1.0_2674540.1">
    <property type="protein sequence ID" value="TraesPARA_EIv1.0_2674540.1.CDS1"/>
    <property type="gene ID" value="TraesPARA_EIv1.0_2674540"/>
</dbReference>
<dbReference type="Gramene" id="TraesPARA_EIv1.0_2675030.1">
    <property type="protein sequence ID" value="TraesPARA_EIv1.0_2675030.1.CDS1"/>
    <property type="gene ID" value="TraesPARA_EIv1.0_2675030"/>
</dbReference>
<dbReference type="Gramene" id="TraesPARA_EIv1.0_2675150.1">
    <property type="protein sequence ID" value="TraesPARA_EIv1.0_2675150.1.CDS1"/>
    <property type="gene ID" value="TraesPARA_EIv1.0_2675150"/>
</dbReference>
<dbReference type="Gramene" id="TraesPARA_EIv1.0_2675280.1">
    <property type="protein sequence ID" value="TraesPARA_EIv1.0_2675280.1.CDS1"/>
    <property type="gene ID" value="TraesPARA_EIv1.0_2675280"/>
</dbReference>
<dbReference type="Gramene" id="TraesPARA_EIv1.0_2676390.1">
    <property type="protein sequence ID" value="TraesPARA_EIv1.0_2676390.1.CDS1"/>
    <property type="gene ID" value="TraesPARA_EIv1.0_2676390"/>
</dbReference>
<dbReference type="Gramene" id="TraesPARA_EIv1.0_2677030.1">
    <property type="protein sequence ID" value="TraesPARA_EIv1.0_2677030.1.CDS1"/>
    <property type="gene ID" value="TraesPARA_EIv1.0_2677030"/>
</dbReference>
<dbReference type="Gramene" id="TraesPARA_EIv1.0_2677090.1">
    <property type="protein sequence ID" value="TraesPARA_EIv1.0_2677090.1.CDS1"/>
    <property type="gene ID" value="TraesPARA_EIv1.0_2677090"/>
</dbReference>
<dbReference type="Gramene" id="TraesPARA_EIv1.0_2677370.1">
    <property type="protein sequence ID" value="TraesPARA_EIv1.0_2677370.1.CDS1"/>
    <property type="gene ID" value="TraesPARA_EIv1.0_2677370"/>
</dbReference>
<dbReference type="Gramene" id="TraesPARA_EIv1.0_2677660.1">
    <property type="protein sequence ID" value="TraesPARA_EIv1.0_2677660.1.CDS1"/>
    <property type="gene ID" value="TraesPARA_EIv1.0_2677660"/>
</dbReference>
<dbReference type="Gramene" id="TraesPARA_EIv1.0_2679010.1">
    <property type="protein sequence ID" value="TraesPARA_EIv1.0_2679010.1.CDS1"/>
    <property type="gene ID" value="TraesPARA_EIv1.0_2679010"/>
</dbReference>
<dbReference type="Gramene" id="TraesPARA_EIv1.0_2679980.1">
    <property type="protein sequence ID" value="TraesPARA_EIv1.0_2679980.1.CDS1"/>
    <property type="gene ID" value="TraesPARA_EIv1.0_2679980"/>
</dbReference>
<dbReference type="Gramene" id="TraesPARA_EIv1.0_2680330.1">
    <property type="protein sequence ID" value="TraesPARA_EIv1.0_2680330.1.CDS1"/>
    <property type="gene ID" value="TraesPARA_EIv1.0_2680330"/>
</dbReference>
<dbReference type="Gramene" id="TraesPARA_EIv1.0_2680610.1">
    <property type="protein sequence ID" value="TraesPARA_EIv1.0_2680610.1.CDS1"/>
    <property type="gene ID" value="TraesPARA_EIv1.0_2680610"/>
</dbReference>
<dbReference type="Gramene" id="TraesPARA_EIv1.0_2680910.1">
    <property type="protein sequence ID" value="TraesPARA_EIv1.0_2680910.1.CDS1"/>
    <property type="gene ID" value="TraesPARA_EIv1.0_2680910"/>
</dbReference>
<dbReference type="Gramene" id="TraesPARA_EIv1.0_2681040.1">
    <property type="protein sequence ID" value="TraesPARA_EIv1.0_2681040.1.CDS1"/>
    <property type="gene ID" value="TraesPARA_EIv1.0_2681040"/>
</dbReference>
<dbReference type="Gramene" id="TraesPARA_EIv1.0_2681270.1">
    <property type="protein sequence ID" value="TraesPARA_EIv1.0_2681270.1.CDS1"/>
    <property type="gene ID" value="TraesPARA_EIv1.0_2681270"/>
</dbReference>
<dbReference type="Gramene" id="TraesPARA_EIv1.0_2681360.1">
    <property type="protein sequence ID" value="TraesPARA_EIv1.0_2681360.1.CDS1"/>
    <property type="gene ID" value="TraesPARA_EIv1.0_2681360"/>
</dbReference>
<dbReference type="Gramene" id="TraesPARA_EIv1.0_2681580.1">
    <property type="protein sequence ID" value="TraesPARA_EIv1.0_2681580.1.CDS1"/>
    <property type="gene ID" value="TraesPARA_EIv1.0_2681580"/>
</dbReference>
<dbReference type="KEGG" id="taes:803119"/>
<dbReference type="eggNOG" id="KOG4845">
    <property type="taxonomic scope" value="Eukaryota"/>
</dbReference>
<dbReference type="HOGENOM" id="CLU_007100_4_0_1"/>
<dbReference type="Proteomes" id="UP000019116">
    <property type="component" value="Chloroplast"/>
</dbReference>
<dbReference type="ExpressionAtlas" id="P58420">
    <property type="expression patterns" value="differential"/>
</dbReference>
<dbReference type="GO" id="GO:0009535">
    <property type="term" value="C:chloroplast thylakoid membrane"/>
    <property type="evidence" value="ECO:0007669"/>
    <property type="project" value="UniProtKB-SubCell"/>
</dbReference>
<dbReference type="GO" id="GO:0008137">
    <property type="term" value="F:NADH dehydrogenase (ubiquinone) activity"/>
    <property type="evidence" value="ECO:0007669"/>
    <property type="project" value="InterPro"/>
</dbReference>
<dbReference type="GO" id="GO:0048039">
    <property type="term" value="F:ubiquinone binding"/>
    <property type="evidence" value="ECO:0000318"/>
    <property type="project" value="GO_Central"/>
</dbReference>
<dbReference type="GO" id="GO:0009060">
    <property type="term" value="P:aerobic respiration"/>
    <property type="evidence" value="ECO:0000318"/>
    <property type="project" value="GO_Central"/>
</dbReference>
<dbReference type="GO" id="GO:0042773">
    <property type="term" value="P:ATP synthesis coupled electron transport"/>
    <property type="evidence" value="ECO:0007669"/>
    <property type="project" value="InterPro"/>
</dbReference>
<dbReference type="GO" id="GO:0015990">
    <property type="term" value="P:electron transport coupled proton transport"/>
    <property type="evidence" value="ECO:0000318"/>
    <property type="project" value="GO_Central"/>
</dbReference>
<dbReference type="HAMAP" id="MF_00491">
    <property type="entry name" value="NDH1_NuoM"/>
    <property type="match status" value="1"/>
</dbReference>
<dbReference type="InterPro" id="IPR022997">
    <property type="entry name" value="NADH_Q_OxRdtase_chain4"/>
</dbReference>
<dbReference type="InterPro" id="IPR010227">
    <property type="entry name" value="NADH_Q_OxRdtase_chainM/4"/>
</dbReference>
<dbReference type="InterPro" id="IPR003918">
    <property type="entry name" value="NADH_UbQ_OxRdtase"/>
</dbReference>
<dbReference type="InterPro" id="IPR001750">
    <property type="entry name" value="ND/Mrp_TM"/>
</dbReference>
<dbReference type="NCBIfam" id="TIGR01972">
    <property type="entry name" value="NDH_I_M"/>
    <property type="match status" value="1"/>
</dbReference>
<dbReference type="PANTHER" id="PTHR43507:SF21">
    <property type="entry name" value="NAD(P)H-QUINONE OXIDOREDUCTASE CHAIN 4, CHLOROPLASTIC"/>
    <property type="match status" value="1"/>
</dbReference>
<dbReference type="PANTHER" id="PTHR43507">
    <property type="entry name" value="NADH-UBIQUINONE OXIDOREDUCTASE CHAIN 4"/>
    <property type="match status" value="1"/>
</dbReference>
<dbReference type="Pfam" id="PF00361">
    <property type="entry name" value="Proton_antipo_M"/>
    <property type="match status" value="1"/>
</dbReference>
<dbReference type="PRINTS" id="PR01437">
    <property type="entry name" value="NUOXDRDTASE4"/>
</dbReference>
<sequence>MSYFPWLTILVVLPIFAGSLIFFLPHKGNKVVRWYTISICLLEFLLMTYAFCYHFQLEDPLIQLKEDYKWIDVFDFHWRLGIDGLSLGSILLTGFITTLATLAAWPITRNSRLFYFLMLAMYSGQIGLFSSRDLLLFFIMWELELIPVYLLLSMWGGKRRLYSATKFILYTAGGSIFFLIGVLGMGLYGSNEPGLDLERLINQSYPATLEILLYFGFLIAYAVKLPIIPLHTWLPDTHGEAHYSTCMLLAGILLKMGAYGLIRINMELLPHAHYLFSPWLVIIGAIQIIYAASTSLGQRNFKKRIAYSSVSHMGFIIIGIGSITNIGLNGAILQILSHGFIGATLFFLAGTASDRMRLVYLEELGGISIPMPKIFTMFSSFSMASLALPGMSGFVAELVVFFGLITSPKFLLMPKTLITFVMAIGMILTPIYLLSMLRQMFYGYKLFNVPNANFVDSGPRELFILICIFLPVIGIGIYPDFVLSLSVDRVEALLSNYYPK</sequence>